<gene>
    <name type="primary">Rpusd1</name>
    <name type="synonym">Rlucl</name>
</gene>
<evidence type="ECO:0000250" key="1"/>
<evidence type="ECO:0000250" key="2">
    <source>
        <dbReference type="UniProtKB" id="Q9UJJ7"/>
    </source>
</evidence>
<evidence type="ECO:0000256" key="3">
    <source>
        <dbReference type="SAM" id="MobiDB-lite"/>
    </source>
</evidence>
<evidence type="ECO:0000305" key="4"/>
<organism>
    <name type="scientific">Mus musculus</name>
    <name type="common">Mouse</name>
    <dbReference type="NCBI Taxonomy" id="10090"/>
    <lineage>
        <taxon>Eukaryota</taxon>
        <taxon>Metazoa</taxon>
        <taxon>Chordata</taxon>
        <taxon>Craniata</taxon>
        <taxon>Vertebrata</taxon>
        <taxon>Euteleostomi</taxon>
        <taxon>Mammalia</taxon>
        <taxon>Eutheria</taxon>
        <taxon>Euarchontoglires</taxon>
        <taxon>Glires</taxon>
        <taxon>Rodentia</taxon>
        <taxon>Myomorpha</taxon>
        <taxon>Muroidea</taxon>
        <taxon>Muridae</taxon>
        <taxon>Murinae</taxon>
        <taxon>Mus</taxon>
        <taxon>Mus</taxon>
    </lineage>
</organism>
<name>RUSD1_MOUSE</name>
<comment type="similarity">
    <text evidence="4">Belongs to the pseudouridine synthase RluA family.</text>
</comment>
<accession>Q8VCZ8</accession>
<keyword id="KW-0007">Acetylation</keyword>
<keyword id="KW-1185">Reference proteome</keyword>
<dbReference type="EMBL" id="AK049334">
    <property type="protein sequence ID" value="BAC33690.1"/>
    <property type="molecule type" value="mRNA"/>
</dbReference>
<dbReference type="EMBL" id="BC018186">
    <property type="protein sequence ID" value="AAH18186.1"/>
    <property type="molecule type" value="mRNA"/>
</dbReference>
<dbReference type="CCDS" id="CCDS28524.1"/>
<dbReference type="RefSeq" id="NP_082285.1">
    <property type="nucleotide sequence ID" value="NM_028009.4"/>
</dbReference>
<dbReference type="RefSeq" id="XP_006523477.1">
    <property type="nucleotide sequence ID" value="XM_006523414.1"/>
</dbReference>
<dbReference type="RefSeq" id="XP_036016143.1">
    <property type="nucleotide sequence ID" value="XM_036160250.1"/>
</dbReference>
<dbReference type="SMR" id="Q8VCZ8"/>
<dbReference type="FunCoup" id="Q8VCZ8">
    <property type="interactions" value="121"/>
</dbReference>
<dbReference type="STRING" id="10090.ENSMUSP00000158547"/>
<dbReference type="iPTMnet" id="Q8VCZ8"/>
<dbReference type="PhosphoSitePlus" id="Q8VCZ8"/>
<dbReference type="PaxDb" id="10090-ENSMUSP00000043825"/>
<dbReference type="ProteomicsDB" id="262730"/>
<dbReference type="Pumba" id="Q8VCZ8"/>
<dbReference type="Antibodypedia" id="22914">
    <property type="antibodies" value="68 antibodies from 14 providers"/>
</dbReference>
<dbReference type="DNASU" id="106707"/>
<dbReference type="Ensembl" id="ENSMUST00000047273.3">
    <property type="protein sequence ID" value="ENSMUSP00000043825.2"/>
    <property type="gene ID" value="ENSMUSG00000041199.4"/>
</dbReference>
<dbReference type="Ensembl" id="ENSMUST00000237785.2">
    <property type="protein sequence ID" value="ENSMUSP00000158547.2"/>
    <property type="gene ID" value="ENSMUSG00000041199.4"/>
</dbReference>
<dbReference type="GeneID" id="106707"/>
<dbReference type="KEGG" id="mmu:106707"/>
<dbReference type="UCSC" id="uc008bbl.1">
    <property type="organism name" value="mouse"/>
</dbReference>
<dbReference type="AGR" id="MGI:1919186"/>
<dbReference type="CTD" id="113000"/>
<dbReference type="MGI" id="MGI:1919186">
    <property type="gene designation" value="Rpusd1"/>
</dbReference>
<dbReference type="VEuPathDB" id="HostDB:ENSMUSG00000041199"/>
<dbReference type="eggNOG" id="KOG1919">
    <property type="taxonomic scope" value="Eukaryota"/>
</dbReference>
<dbReference type="GeneTree" id="ENSGT00510000048339"/>
<dbReference type="HOGENOM" id="CLU_016902_10_0_1"/>
<dbReference type="InParanoid" id="Q8VCZ8"/>
<dbReference type="OMA" id="DSPYRMM"/>
<dbReference type="OrthoDB" id="418349at2759"/>
<dbReference type="PhylomeDB" id="Q8VCZ8"/>
<dbReference type="TreeFam" id="TF324755"/>
<dbReference type="BioGRID-ORCS" id="106707">
    <property type="hits" value="1 hit in 80 CRISPR screens"/>
</dbReference>
<dbReference type="PRO" id="PR:Q8VCZ8"/>
<dbReference type="Proteomes" id="UP000000589">
    <property type="component" value="Chromosome 17"/>
</dbReference>
<dbReference type="RNAct" id="Q8VCZ8">
    <property type="molecule type" value="protein"/>
</dbReference>
<dbReference type="Bgee" id="ENSMUSG00000041199">
    <property type="expression patterns" value="Expressed in primary visual cortex and 167 other cell types or tissues"/>
</dbReference>
<dbReference type="ExpressionAtlas" id="Q8VCZ8">
    <property type="expression patterns" value="baseline and differential"/>
</dbReference>
<dbReference type="GO" id="GO:0009982">
    <property type="term" value="F:pseudouridine synthase activity"/>
    <property type="evidence" value="ECO:0007669"/>
    <property type="project" value="InterPro"/>
</dbReference>
<dbReference type="GO" id="GO:0003723">
    <property type="term" value="F:RNA binding"/>
    <property type="evidence" value="ECO:0007669"/>
    <property type="project" value="InterPro"/>
</dbReference>
<dbReference type="GO" id="GO:0001522">
    <property type="term" value="P:pseudouridine synthesis"/>
    <property type="evidence" value="ECO:0007669"/>
    <property type="project" value="InterPro"/>
</dbReference>
<dbReference type="CDD" id="cd02869">
    <property type="entry name" value="PseudoU_synth_RluA_like"/>
    <property type="match status" value="1"/>
</dbReference>
<dbReference type="Gene3D" id="3.30.2350.10">
    <property type="entry name" value="Pseudouridine synthase"/>
    <property type="match status" value="1"/>
</dbReference>
<dbReference type="InterPro" id="IPR020103">
    <property type="entry name" value="PsdUridine_synth_cat_dom_sf"/>
</dbReference>
<dbReference type="InterPro" id="IPR006145">
    <property type="entry name" value="PsdUridine_synth_RsuA/RluA"/>
</dbReference>
<dbReference type="InterPro" id="IPR050188">
    <property type="entry name" value="RluA_PseudoU_synthase"/>
</dbReference>
<dbReference type="PANTHER" id="PTHR21600">
    <property type="entry name" value="MITOCHONDRIAL RNA PSEUDOURIDINE SYNTHASE"/>
    <property type="match status" value="1"/>
</dbReference>
<dbReference type="PANTHER" id="PTHR21600:SF87">
    <property type="entry name" value="RNA PSEUDOURIDYLATE SYNTHASE DOMAIN-CONTAINING PROTEIN 1"/>
    <property type="match status" value="1"/>
</dbReference>
<dbReference type="Pfam" id="PF00849">
    <property type="entry name" value="PseudoU_synth_2"/>
    <property type="match status" value="1"/>
</dbReference>
<dbReference type="SUPFAM" id="SSF55120">
    <property type="entry name" value="Pseudouridine synthase"/>
    <property type="match status" value="1"/>
</dbReference>
<proteinExistence type="evidence at transcript level"/>
<reference key="1">
    <citation type="journal article" date="2005" name="Science">
        <title>The transcriptional landscape of the mammalian genome.</title>
        <authorList>
            <person name="Carninci P."/>
            <person name="Kasukawa T."/>
            <person name="Katayama S."/>
            <person name="Gough J."/>
            <person name="Frith M.C."/>
            <person name="Maeda N."/>
            <person name="Oyama R."/>
            <person name="Ravasi T."/>
            <person name="Lenhard B."/>
            <person name="Wells C."/>
            <person name="Kodzius R."/>
            <person name="Shimokawa K."/>
            <person name="Bajic V.B."/>
            <person name="Brenner S.E."/>
            <person name="Batalov S."/>
            <person name="Forrest A.R."/>
            <person name="Zavolan M."/>
            <person name="Davis M.J."/>
            <person name="Wilming L.G."/>
            <person name="Aidinis V."/>
            <person name="Allen J.E."/>
            <person name="Ambesi-Impiombato A."/>
            <person name="Apweiler R."/>
            <person name="Aturaliya R.N."/>
            <person name="Bailey T.L."/>
            <person name="Bansal M."/>
            <person name="Baxter L."/>
            <person name="Beisel K.W."/>
            <person name="Bersano T."/>
            <person name="Bono H."/>
            <person name="Chalk A.M."/>
            <person name="Chiu K.P."/>
            <person name="Choudhary V."/>
            <person name="Christoffels A."/>
            <person name="Clutterbuck D.R."/>
            <person name="Crowe M.L."/>
            <person name="Dalla E."/>
            <person name="Dalrymple B.P."/>
            <person name="de Bono B."/>
            <person name="Della Gatta G."/>
            <person name="di Bernardo D."/>
            <person name="Down T."/>
            <person name="Engstrom P."/>
            <person name="Fagiolini M."/>
            <person name="Faulkner G."/>
            <person name="Fletcher C.F."/>
            <person name="Fukushima T."/>
            <person name="Furuno M."/>
            <person name="Futaki S."/>
            <person name="Gariboldi M."/>
            <person name="Georgii-Hemming P."/>
            <person name="Gingeras T.R."/>
            <person name="Gojobori T."/>
            <person name="Green R.E."/>
            <person name="Gustincich S."/>
            <person name="Harbers M."/>
            <person name="Hayashi Y."/>
            <person name="Hensch T.K."/>
            <person name="Hirokawa N."/>
            <person name="Hill D."/>
            <person name="Huminiecki L."/>
            <person name="Iacono M."/>
            <person name="Ikeo K."/>
            <person name="Iwama A."/>
            <person name="Ishikawa T."/>
            <person name="Jakt M."/>
            <person name="Kanapin A."/>
            <person name="Katoh M."/>
            <person name="Kawasawa Y."/>
            <person name="Kelso J."/>
            <person name="Kitamura H."/>
            <person name="Kitano H."/>
            <person name="Kollias G."/>
            <person name="Krishnan S.P."/>
            <person name="Kruger A."/>
            <person name="Kummerfeld S.K."/>
            <person name="Kurochkin I.V."/>
            <person name="Lareau L.F."/>
            <person name="Lazarevic D."/>
            <person name="Lipovich L."/>
            <person name="Liu J."/>
            <person name="Liuni S."/>
            <person name="McWilliam S."/>
            <person name="Madan Babu M."/>
            <person name="Madera M."/>
            <person name="Marchionni L."/>
            <person name="Matsuda H."/>
            <person name="Matsuzawa S."/>
            <person name="Miki H."/>
            <person name="Mignone F."/>
            <person name="Miyake S."/>
            <person name="Morris K."/>
            <person name="Mottagui-Tabar S."/>
            <person name="Mulder N."/>
            <person name="Nakano N."/>
            <person name="Nakauchi H."/>
            <person name="Ng P."/>
            <person name="Nilsson R."/>
            <person name="Nishiguchi S."/>
            <person name="Nishikawa S."/>
            <person name="Nori F."/>
            <person name="Ohara O."/>
            <person name="Okazaki Y."/>
            <person name="Orlando V."/>
            <person name="Pang K.C."/>
            <person name="Pavan W.J."/>
            <person name="Pavesi G."/>
            <person name="Pesole G."/>
            <person name="Petrovsky N."/>
            <person name="Piazza S."/>
            <person name="Reed J."/>
            <person name="Reid J.F."/>
            <person name="Ring B.Z."/>
            <person name="Ringwald M."/>
            <person name="Rost B."/>
            <person name="Ruan Y."/>
            <person name="Salzberg S.L."/>
            <person name="Sandelin A."/>
            <person name="Schneider C."/>
            <person name="Schoenbach C."/>
            <person name="Sekiguchi K."/>
            <person name="Semple C.A."/>
            <person name="Seno S."/>
            <person name="Sessa L."/>
            <person name="Sheng Y."/>
            <person name="Shibata Y."/>
            <person name="Shimada H."/>
            <person name="Shimada K."/>
            <person name="Silva D."/>
            <person name="Sinclair B."/>
            <person name="Sperling S."/>
            <person name="Stupka E."/>
            <person name="Sugiura K."/>
            <person name="Sultana R."/>
            <person name="Takenaka Y."/>
            <person name="Taki K."/>
            <person name="Tammoja K."/>
            <person name="Tan S.L."/>
            <person name="Tang S."/>
            <person name="Taylor M.S."/>
            <person name="Tegner J."/>
            <person name="Teichmann S.A."/>
            <person name="Ueda H.R."/>
            <person name="van Nimwegen E."/>
            <person name="Verardo R."/>
            <person name="Wei C.L."/>
            <person name="Yagi K."/>
            <person name="Yamanishi H."/>
            <person name="Zabarovsky E."/>
            <person name="Zhu S."/>
            <person name="Zimmer A."/>
            <person name="Hide W."/>
            <person name="Bult C."/>
            <person name="Grimmond S.M."/>
            <person name="Teasdale R.D."/>
            <person name="Liu E.T."/>
            <person name="Brusic V."/>
            <person name="Quackenbush J."/>
            <person name="Wahlestedt C."/>
            <person name="Mattick J.S."/>
            <person name="Hume D.A."/>
            <person name="Kai C."/>
            <person name="Sasaki D."/>
            <person name="Tomaru Y."/>
            <person name="Fukuda S."/>
            <person name="Kanamori-Katayama M."/>
            <person name="Suzuki M."/>
            <person name="Aoki J."/>
            <person name="Arakawa T."/>
            <person name="Iida J."/>
            <person name="Imamura K."/>
            <person name="Itoh M."/>
            <person name="Kato T."/>
            <person name="Kawaji H."/>
            <person name="Kawagashira N."/>
            <person name="Kawashima T."/>
            <person name="Kojima M."/>
            <person name="Kondo S."/>
            <person name="Konno H."/>
            <person name="Nakano K."/>
            <person name="Ninomiya N."/>
            <person name="Nishio T."/>
            <person name="Okada M."/>
            <person name="Plessy C."/>
            <person name="Shibata K."/>
            <person name="Shiraki T."/>
            <person name="Suzuki S."/>
            <person name="Tagami M."/>
            <person name="Waki K."/>
            <person name="Watahiki A."/>
            <person name="Okamura-Oho Y."/>
            <person name="Suzuki H."/>
            <person name="Kawai J."/>
            <person name="Hayashizaki Y."/>
        </authorList>
    </citation>
    <scope>NUCLEOTIDE SEQUENCE [LARGE SCALE MRNA]</scope>
    <source>
        <strain>C57BL/6J</strain>
    </source>
</reference>
<reference key="2">
    <citation type="journal article" date="2004" name="Genome Res.">
        <title>The status, quality, and expansion of the NIH full-length cDNA project: the Mammalian Gene Collection (MGC).</title>
        <authorList>
            <consortium name="The MGC Project Team"/>
        </authorList>
    </citation>
    <scope>NUCLEOTIDE SEQUENCE [LARGE SCALE MRNA]</scope>
    <source>
        <strain>FVB/N</strain>
        <tissue>Liver</tissue>
    </source>
</reference>
<feature type="chain" id="PRO_0000300817" description="RNA pseudouridylate synthase domain-containing protein 1">
    <location>
        <begin position="1"/>
        <end position="306"/>
    </location>
</feature>
<feature type="region of interest" description="Disordered" evidence="3">
    <location>
        <begin position="255"/>
        <end position="290"/>
    </location>
</feature>
<feature type="compositionally biased region" description="Pro residues" evidence="3">
    <location>
        <begin position="269"/>
        <end position="285"/>
    </location>
</feature>
<feature type="active site" evidence="1">
    <location>
        <position position="67"/>
    </location>
</feature>
<feature type="modified residue" description="N-acetylmethionine" evidence="2">
    <location>
        <position position="1"/>
    </location>
</feature>
<sequence length="306" mass="34231">MEPGSMENLSIVYQSSDFLVVNKHWDLRIDSKTWRETLTLQKQLRHHFPELADPDTCYGFRFCHQLDFSTSGALCVALNKAAAGSAYKCFKERRVTKAYLALVRGHVQESQVTINYAIGRNSTEGRTHTMCIEGTHGCENPKPSLTELLVLEHGLYAGDPVSKVLLKPLTGRTHQLRVHCSALGHPIVGDLTYGQAEDQEDQPFRMMLHAFYLRIPTQAERVEACTPDPFLPALDACWSPSTCVQPLEQLIQALRTDPDPDPMSGGPRPCSPSTPQPRPGRPPPETEAQRASCLQWLSEWTLEPDN</sequence>
<protein>
    <recommendedName>
        <fullName>RNA pseudouridylate synthase domain-containing protein 1</fullName>
    </recommendedName>
    <alternativeName>
        <fullName>Ribosomal large subunit pseudouridine synthase C-like protein</fullName>
    </alternativeName>
</protein>